<protein>
    <recommendedName>
        <fullName evidence="1">Iron-sulfur cluster repair protein YtfE</fullName>
    </recommendedName>
</protein>
<dbReference type="EMBL" id="CP001048">
    <property type="protein sequence ID" value="ACC87461.1"/>
    <property type="molecule type" value="Genomic_DNA"/>
</dbReference>
<dbReference type="RefSeq" id="WP_012413449.1">
    <property type="nucleotide sequence ID" value="NZ_CP009780.1"/>
</dbReference>
<dbReference type="SMR" id="B2K2M0"/>
<dbReference type="GeneID" id="49787555"/>
<dbReference type="KEGG" id="ypb:YPTS_0475"/>
<dbReference type="PATRIC" id="fig|502801.10.peg.4148"/>
<dbReference type="GO" id="GO:0005737">
    <property type="term" value="C:cytoplasm"/>
    <property type="evidence" value="ECO:0007669"/>
    <property type="project" value="UniProtKB-SubCell"/>
</dbReference>
<dbReference type="GO" id="GO:0046872">
    <property type="term" value="F:metal ion binding"/>
    <property type="evidence" value="ECO:0007669"/>
    <property type="project" value="UniProtKB-KW"/>
</dbReference>
<dbReference type="GO" id="GO:0030091">
    <property type="term" value="P:protein repair"/>
    <property type="evidence" value="ECO:0007669"/>
    <property type="project" value="UniProtKB-UniRule"/>
</dbReference>
<dbReference type="GO" id="GO:0051409">
    <property type="term" value="P:response to nitrosative stress"/>
    <property type="evidence" value="ECO:0007669"/>
    <property type="project" value="UniProtKB-UniRule"/>
</dbReference>
<dbReference type="GO" id="GO:0006979">
    <property type="term" value="P:response to oxidative stress"/>
    <property type="evidence" value="ECO:0007669"/>
    <property type="project" value="UniProtKB-UniRule"/>
</dbReference>
<dbReference type="CDD" id="cd12108">
    <property type="entry name" value="Hr-like"/>
    <property type="match status" value="1"/>
</dbReference>
<dbReference type="Gene3D" id="1.20.120.520">
    <property type="entry name" value="nmb1532 protein domain like"/>
    <property type="match status" value="1"/>
</dbReference>
<dbReference type="HAMAP" id="MF_01606">
    <property type="entry name" value="RIC_YtfE"/>
    <property type="match status" value="1"/>
</dbReference>
<dbReference type="InterPro" id="IPR023742">
    <property type="entry name" value="FeS-repair_YftE"/>
</dbReference>
<dbReference type="InterPro" id="IPR012312">
    <property type="entry name" value="Hemerythrin-like"/>
</dbReference>
<dbReference type="InterPro" id="IPR019903">
    <property type="entry name" value="RIC_family"/>
</dbReference>
<dbReference type="NCBIfam" id="TIGR03652">
    <property type="entry name" value="FeS_repair_RIC"/>
    <property type="match status" value="1"/>
</dbReference>
<dbReference type="NCBIfam" id="NF008221">
    <property type="entry name" value="PRK10992.1"/>
    <property type="match status" value="1"/>
</dbReference>
<dbReference type="PANTHER" id="PTHR36438">
    <property type="entry name" value="IRON-SULFUR CLUSTER REPAIR PROTEIN YTFE"/>
    <property type="match status" value="1"/>
</dbReference>
<dbReference type="PANTHER" id="PTHR36438:SF1">
    <property type="entry name" value="IRON-SULFUR CLUSTER REPAIR PROTEIN YTFE"/>
    <property type="match status" value="1"/>
</dbReference>
<dbReference type="Pfam" id="PF01814">
    <property type="entry name" value="Hemerythrin"/>
    <property type="match status" value="1"/>
</dbReference>
<dbReference type="Pfam" id="PF04405">
    <property type="entry name" value="ScdA_N"/>
    <property type="match status" value="1"/>
</dbReference>
<reference key="1">
    <citation type="submission" date="2008-04" db="EMBL/GenBank/DDBJ databases">
        <title>Complete sequence of Yersinia pseudotuberculosis PB1/+.</title>
        <authorList>
            <person name="Copeland A."/>
            <person name="Lucas S."/>
            <person name="Lapidus A."/>
            <person name="Glavina del Rio T."/>
            <person name="Dalin E."/>
            <person name="Tice H."/>
            <person name="Bruce D."/>
            <person name="Goodwin L."/>
            <person name="Pitluck S."/>
            <person name="Munk A.C."/>
            <person name="Brettin T."/>
            <person name="Detter J.C."/>
            <person name="Han C."/>
            <person name="Tapia R."/>
            <person name="Schmutz J."/>
            <person name="Larimer F."/>
            <person name="Land M."/>
            <person name="Hauser L."/>
            <person name="Challacombe J.F."/>
            <person name="Green L."/>
            <person name="Lindler L.E."/>
            <person name="Nikolich M.P."/>
            <person name="Richardson P."/>
        </authorList>
    </citation>
    <scope>NUCLEOTIDE SEQUENCE [LARGE SCALE GENOMIC DNA]</scope>
    <source>
        <strain>PB1/+</strain>
    </source>
</reference>
<keyword id="KW-0963">Cytoplasm</keyword>
<keyword id="KW-0408">Iron</keyword>
<keyword id="KW-0479">Metal-binding</keyword>
<keyword id="KW-0346">Stress response</keyword>
<sequence length="221" mass="25049">MDYRNQSLGALAIAIPQATKLFRQHQLDFCCGGKQTLLRAANKLNLDIDALEAQLSALQTEPHSSEDWQQQPLTNLISFIISRYHDRHREQLPELVLMAEKVERVHGEKPTCPRGLAAELSAILEELTQHMYKEEQILFPMIQRGMGSQASGPIFVMEAEHDAVGQQLEVVKQLTQNVTPPEGACNTWRALYTGINEFITDLMEHIHLENNLLFPRALRGE</sequence>
<comment type="function">
    <text evidence="1">Di-iron-containing protein involved in the repair of iron-sulfur clusters damaged by oxidative and nitrosative stress conditions.</text>
</comment>
<comment type="subunit">
    <text evidence="1">Homodimer.</text>
</comment>
<comment type="subcellular location">
    <subcellularLocation>
        <location evidence="1">Cytoplasm</location>
    </subcellularLocation>
</comment>
<comment type="similarity">
    <text evidence="1">Belongs to the RIC family. YtfE subfamily.</text>
</comment>
<feature type="chain" id="PRO_1000148191" description="Iron-sulfur cluster repair protein YtfE">
    <location>
        <begin position="1"/>
        <end position="221"/>
    </location>
</feature>
<gene>
    <name evidence="1" type="primary">ytfE</name>
    <name type="ordered locus">YPTS_0475</name>
</gene>
<accession>B2K2M0</accession>
<proteinExistence type="inferred from homology"/>
<organism>
    <name type="scientific">Yersinia pseudotuberculosis serotype IB (strain PB1/+)</name>
    <dbReference type="NCBI Taxonomy" id="502801"/>
    <lineage>
        <taxon>Bacteria</taxon>
        <taxon>Pseudomonadati</taxon>
        <taxon>Pseudomonadota</taxon>
        <taxon>Gammaproteobacteria</taxon>
        <taxon>Enterobacterales</taxon>
        <taxon>Yersiniaceae</taxon>
        <taxon>Yersinia</taxon>
    </lineage>
</organism>
<name>YTFE_YERPB</name>
<evidence type="ECO:0000255" key="1">
    <source>
        <dbReference type="HAMAP-Rule" id="MF_01606"/>
    </source>
</evidence>